<accession>Q9ES72</accession>
<sequence length="379" mass="41687">MSSSTIKTLAVAVTLLHLTRLALSTCPAACHCPLEAPKCAPGVGLVRDGCGCCKVCAKQLNEDCSKTQPCDHTKGLECNFGASSTALKGICRAQSEGRPCEYNSRIYQNGESFQPNCKHQCTCIDGAVGCIPLCPQELSLPNLGCPNPRLVKVSGQCCEEWVCDEDSIKDSLDDQDDLLGFDASEVELTRNNELIAIGKGSSLKRLPVFGTEPRVLYNPLHAHGQKCIVQTTSWSQCSKSCGTGISTRVTNDNSECRLVKETRICEVRPCGQPVYSSLKKGKKCSKTKKSPEPVRFTYAGCSSVKKYRPKYCGSCVDGRCCTPLQTRTVKMRFRCEDGEMFSKNVMMIQSCKCNYNCPHPNEASFRLYSLFNDIHKFRD</sequence>
<gene>
    <name evidence="11" type="primary">Ccn1</name>
    <name evidence="9" type="synonym">Cyr61</name>
    <name type="synonym">Igfbp10</name>
</gene>
<organism>
    <name type="scientific">Rattus norvegicus</name>
    <name type="common">Rat</name>
    <dbReference type="NCBI Taxonomy" id="10116"/>
    <lineage>
        <taxon>Eukaryota</taxon>
        <taxon>Metazoa</taxon>
        <taxon>Chordata</taxon>
        <taxon>Craniata</taxon>
        <taxon>Vertebrata</taxon>
        <taxon>Euteleostomi</taxon>
        <taxon>Mammalia</taxon>
        <taxon>Eutheria</taxon>
        <taxon>Euarchontoglires</taxon>
        <taxon>Glires</taxon>
        <taxon>Rodentia</taxon>
        <taxon>Myomorpha</taxon>
        <taxon>Muroidea</taxon>
        <taxon>Muridae</taxon>
        <taxon>Murinae</taxon>
        <taxon>Rattus</taxon>
    </lineage>
</organism>
<name>CCN1_RAT</name>
<protein>
    <recommendedName>
        <fullName evidence="10">CCN family member 1</fullName>
    </recommendedName>
    <alternativeName>
        <fullName>Cellular communication network factor 1</fullName>
    </alternativeName>
    <alternativeName>
        <fullName>Cysteine-rich angiogenic inducer 61</fullName>
    </alternativeName>
    <alternativeName>
        <fullName>Insulin-like growth factor-binding protein 10</fullName>
        <shortName>IBP-10</shortName>
        <shortName>IGF-binding protein 10</shortName>
        <shortName>IGFBP-10</shortName>
    </alternativeName>
    <alternativeName>
        <fullName>Protein CYR61</fullName>
    </alternativeName>
</protein>
<proteinExistence type="evidence at transcript level"/>
<reference key="1">
    <citation type="journal article" date="2000" name="J. Biol. Chem.">
        <title>Muscarinic acetylcholine receptors induce the expression of the immediate early growth regulatory gene CYR61.</title>
        <authorList>
            <person name="Albrecht C."/>
            <person name="von Der Kammer H."/>
            <person name="Mayhaus M."/>
            <person name="Klaudiny J."/>
            <person name="Schweizer M."/>
            <person name="Nitsch R.M."/>
        </authorList>
    </citation>
    <scope>NUCLEOTIDE SEQUENCE [MRNA]</scope>
    <source>
        <tissue>Lung</tissue>
    </source>
</reference>
<comment type="function">
    <text evidence="1">Promotes cell proliferation, chemotaxis, angiogenesis and cell adhesion. Appears to play a role in wound healing by up-regulating, in skin fibroblasts, the expression of a number of genes involved in angiogenesis, inflammation and matrix remodeling including VEGA-A, VEGA-C, MMP1, MMP3, TIMP1, uPA, PAI-1 and integrins alpha-3 and alpha-5 (By similarity). CCN1-mediated gene regulation is dependent on heparin-binding (By similarity). Down-regulates the expression of alpha-1 and alpha-2 subunits of collagen type-1 (By similarity). Promotes cell adhesion and adhesive signaling through integrin alpha-6/beta-1, cell migration through integrin alpha-1/beta-5 and cell proliferation through integrin alpha-v/beta-3 (By similarity).</text>
</comment>
<comment type="subunit">
    <text evidence="1">Interaction with integrins is heparin- and cell-type-dependent and promotes cell adhesion.</text>
</comment>
<comment type="subcellular location">
    <subcellularLocation>
        <location>Secreted</location>
    </subcellularLocation>
</comment>
<comment type="similarity">
    <text evidence="10">Belongs to the CCN family.</text>
</comment>
<keyword id="KW-0130">Cell adhesion</keyword>
<keyword id="KW-0145">Chemotaxis</keyword>
<keyword id="KW-1015">Disulfide bond</keyword>
<keyword id="KW-0340">Growth factor binding</keyword>
<keyword id="KW-0358">Heparin-binding</keyword>
<keyword id="KW-0597">Phosphoprotein</keyword>
<keyword id="KW-1185">Reference proteome</keyword>
<keyword id="KW-0964">Secreted</keyword>
<keyword id="KW-0732">Signal</keyword>
<dbReference type="EMBL" id="AF218568">
    <property type="protein sequence ID" value="AAG14964.1"/>
    <property type="molecule type" value="mRNA"/>
</dbReference>
<dbReference type="RefSeq" id="NP_112617.2">
    <property type="nucleotide sequence ID" value="NM_031327.2"/>
</dbReference>
<dbReference type="SMR" id="Q9ES72"/>
<dbReference type="BioGRID" id="249714">
    <property type="interactions" value="1"/>
</dbReference>
<dbReference type="FunCoup" id="Q9ES72">
    <property type="interactions" value="873"/>
</dbReference>
<dbReference type="IntAct" id="Q9ES72">
    <property type="interactions" value="1"/>
</dbReference>
<dbReference type="STRING" id="10116.ENSRNOP00000019501"/>
<dbReference type="PhosphoSitePlus" id="Q9ES72"/>
<dbReference type="PaxDb" id="10116-ENSRNOP00000019501"/>
<dbReference type="GeneID" id="83476"/>
<dbReference type="KEGG" id="rno:83476"/>
<dbReference type="AGR" id="RGD:620763"/>
<dbReference type="CTD" id="3491"/>
<dbReference type="RGD" id="620763">
    <property type="gene designation" value="Ccn1"/>
</dbReference>
<dbReference type="eggNOG" id="ENOG502QQQQ">
    <property type="taxonomic scope" value="Eukaryota"/>
</dbReference>
<dbReference type="InParanoid" id="Q9ES72"/>
<dbReference type="PhylomeDB" id="Q9ES72"/>
<dbReference type="Reactome" id="R-RNO-381426">
    <property type="pathway name" value="Regulation of Insulin-like Growth Factor (IGF) transport and uptake by Insulin-like Growth Factor Binding Proteins (IGFBPs)"/>
</dbReference>
<dbReference type="Reactome" id="R-RNO-8957275">
    <property type="pathway name" value="Post-translational protein phosphorylation"/>
</dbReference>
<dbReference type="PRO" id="PR:Q9ES72"/>
<dbReference type="Proteomes" id="UP000002494">
    <property type="component" value="Unplaced"/>
</dbReference>
<dbReference type="GO" id="GO:0005829">
    <property type="term" value="C:cytosol"/>
    <property type="evidence" value="ECO:0000314"/>
    <property type="project" value="RGD"/>
</dbReference>
<dbReference type="GO" id="GO:0031012">
    <property type="term" value="C:extracellular matrix"/>
    <property type="evidence" value="ECO:0000318"/>
    <property type="project" value="GO_Central"/>
</dbReference>
<dbReference type="GO" id="GO:0005615">
    <property type="term" value="C:extracellular space"/>
    <property type="evidence" value="ECO:0000318"/>
    <property type="project" value="GO_Central"/>
</dbReference>
<dbReference type="GO" id="GO:0016020">
    <property type="term" value="C:membrane"/>
    <property type="evidence" value="ECO:0000314"/>
    <property type="project" value="RGD"/>
</dbReference>
<dbReference type="GO" id="GO:0050840">
    <property type="term" value="F:extracellular matrix binding"/>
    <property type="evidence" value="ECO:0000266"/>
    <property type="project" value="RGD"/>
</dbReference>
<dbReference type="GO" id="GO:0019838">
    <property type="term" value="F:growth factor binding"/>
    <property type="evidence" value="ECO:0007669"/>
    <property type="project" value="UniProtKB-KW"/>
</dbReference>
<dbReference type="GO" id="GO:0008201">
    <property type="term" value="F:heparin binding"/>
    <property type="evidence" value="ECO:0000318"/>
    <property type="project" value="GO_Central"/>
</dbReference>
<dbReference type="GO" id="GO:0005178">
    <property type="term" value="F:integrin binding"/>
    <property type="evidence" value="ECO:0000266"/>
    <property type="project" value="RGD"/>
</dbReference>
<dbReference type="GO" id="GO:0006915">
    <property type="term" value="P:apoptotic process"/>
    <property type="evidence" value="ECO:0000266"/>
    <property type="project" value="RGD"/>
</dbReference>
<dbReference type="GO" id="GO:0003278">
    <property type="term" value="P:apoptotic process involved in heart morphogenesis"/>
    <property type="evidence" value="ECO:0000266"/>
    <property type="project" value="RGD"/>
</dbReference>
<dbReference type="GO" id="GO:0060413">
    <property type="term" value="P:atrial septum morphogenesis"/>
    <property type="evidence" value="ECO:0000266"/>
    <property type="project" value="RGD"/>
</dbReference>
<dbReference type="GO" id="GO:0003181">
    <property type="term" value="P:atrioventricular valve morphogenesis"/>
    <property type="evidence" value="ECO:0000266"/>
    <property type="project" value="RGD"/>
</dbReference>
<dbReference type="GO" id="GO:0007155">
    <property type="term" value="P:cell adhesion"/>
    <property type="evidence" value="ECO:0000314"/>
    <property type="project" value="RGD"/>
</dbReference>
<dbReference type="GO" id="GO:0098609">
    <property type="term" value="P:cell-cell adhesion"/>
    <property type="evidence" value="ECO:0000266"/>
    <property type="project" value="RGD"/>
</dbReference>
<dbReference type="GO" id="GO:1904385">
    <property type="term" value="P:cellular response to angiotensin"/>
    <property type="evidence" value="ECO:0000270"/>
    <property type="project" value="RGD"/>
</dbReference>
<dbReference type="GO" id="GO:0071456">
    <property type="term" value="P:cellular response to hypoxia"/>
    <property type="evidence" value="ECO:0000270"/>
    <property type="project" value="RGD"/>
</dbReference>
<dbReference type="GO" id="GO:0071874">
    <property type="term" value="P:cellular response to norepinephrine stimulus"/>
    <property type="evidence" value="ECO:0000270"/>
    <property type="project" value="RGD"/>
</dbReference>
<dbReference type="GO" id="GO:0071356">
    <property type="term" value="P:cellular response to tumor necrosis factor"/>
    <property type="evidence" value="ECO:0000270"/>
    <property type="project" value="RGD"/>
</dbReference>
<dbReference type="GO" id="GO:0006935">
    <property type="term" value="P:chemotaxis"/>
    <property type="evidence" value="ECO:0000314"/>
    <property type="project" value="RGD"/>
</dbReference>
<dbReference type="GO" id="GO:0060591">
    <property type="term" value="P:chondroblast differentiation"/>
    <property type="evidence" value="ECO:0000266"/>
    <property type="project" value="RGD"/>
</dbReference>
<dbReference type="GO" id="GO:0060710">
    <property type="term" value="P:chorio-allantoic fusion"/>
    <property type="evidence" value="ECO:0000266"/>
    <property type="project" value="RGD"/>
</dbReference>
<dbReference type="GO" id="GO:0030198">
    <property type="term" value="P:extracellular matrix organization"/>
    <property type="evidence" value="ECO:0000266"/>
    <property type="project" value="RGD"/>
</dbReference>
<dbReference type="GO" id="GO:0007229">
    <property type="term" value="P:integrin-mediated signaling pathway"/>
    <property type="evidence" value="ECO:0000266"/>
    <property type="project" value="RGD"/>
</dbReference>
<dbReference type="GO" id="GO:0002041">
    <property type="term" value="P:intussusceptive angiogenesis"/>
    <property type="evidence" value="ECO:0000266"/>
    <property type="project" value="RGD"/>
</dbReference>
<dbReference type="GO" id="GO:0060716">
    <property type="term" value="P:labyrinthine layer blood vessel development"/>
    <property type="evidence" value="ECO:0000266"/>
    <property type="project" value="RGD"/>
</dbReference>
<dbReference type="GO" id="GO:0043066">
    <property type="term" value="P:negative regulation of apoptotic process"/>
    <property type="evidence" value="ECO:0000266"/>
    <property type="project" value="RGD"/>
</dbReference>
<dbReference type="GO" id="GO:0001649">
    <property type="term" value="P:osteoblast differentiation"/>
    <property type="evidence" value="ECO:0000266"/>
    <property type="project" value="RGD"/>
</dbReference>
<dbReference type="GO" id="GO:0045766">
    <property type="term" value="P:positive regulation of angiogenesis"/>
    <property type="evidence" value="ECO:0000304"/>
    <property type="project" value="RGD"/>
</dbReference>
<dbReference type="GO" id="GO:0043065">
    <property type="term" value="P:positive regulation of apoptotic process"/>
    <property type="evidence" value="ECO:0000266"/>
    <property type="project" value="RGD"/>
</dbReference>
<dbReference type="GO" id="GO:0030513">
    <property type="term" value="P:positive regulation of BMP signaling pathway"/>
    <property type="evidence" value="ECO:0000266"/>
    <property type="project" value="RGD"/>
</dbReference>
<dbReference type="GO" id="GO:0030501">
    <property type="term" value="P:positive regulation of bone mineralization"/>
    <property type="evidence" value="ECO:0000266"/>
    <property type="project" value="RGD"/>
</dbReference>
<dbReference type="GO" id="GO:0061036">
    <property type="term" value="P:positive regulation of cartilage development"/>
    <property type="evidence" value="ECO:0000266"/>
    <property type="project" value="RGD"/>
</dbReference>
<dbReference type="GO" id="GO:0045597">
    <property type="term" value="P:positive regulation of cell differentiation"/>
    <property type="evidence" value="ECO:0000266"/>
    <property type="project" value="RGD"/>
</dbReference>
<dbReference type="GO" id="GO:0030335">
    <property type="term" value="P:positive regulation of cell migration"/>
    <property type="evidence" value="ECO:0000266"/>
    <property type="project" value="RGD"/>
</dbReference>
<dbReference type="GO" id="GO:0010811">
    <property type="term" value="P:positive regulation of cell-substrate adhesion"/>
    <property type="evidence" value="ECO:0000266"/>
    <property type="project" value="RGD"/>
</dbReference>
<dbReference type="GO" id="GO:2000774">
    <property type="term" value="P:positive regulation of cellular senescence"/>
    <property type="evidence" value="ECO:0000270"/>
    <property type="project" value="RGD"/>
</dbReference>
<dbReference type="GO" id="GO:2000304">
    <property type="term" value="P:positive regulation of ceramide biosynthetic process"/>
    <property type="evidence" value="ECO:0000266"/>
    <property type="project" value="RGD"/>
</dbReference>
<dbReference type="GO" id="GO:2000343">
    <property type="term" value="P:positive regulation of chemokine (C-X-C motif) ligand 2 production"/>
    <property type="evidence" value="ECO:0000315"/>
    <property type="project" value="RGD"/>
</dbReference>
<dbReference type="GO" id="GO:0032731">
    <property type="term" value="P:positive regulation of interleukin-1 beta production"/>
    <property type="evidence" value="ECO:0000315"/>
    <property type="project" value="RGD"/>
</dbReference>
<dbReference type="GO" id="GO:0032740">
    <property type="term" value="P:positive regulation of interleukin-17 production"/>
    <property type="evidence" value="ECO:0000315"/>
    <property type="project" value="RGD"/>
</dbReference>
<dbReference type="GO" id="GO:0032755">
    <property type="term" value="P:positive regulation of interleukin-6 production"/>
    <property type="evidence" value="ECO:0000315"/>
    <property type="project" value="RGD"/>
</dbReference>
<dbReference type="GO" id="GO:0045669">
    <property type="term" value="P:positive regulation of osteoblast differentiation"/>
    <property type="evidence" value="ECO:0000266"/>
    <property type="project" value="RGD"/>
</dbReference>
<dbReference type="GO" id="GO:0033690">
    <property type="term" value="P:positive regulation of osteoblast proliferation"/>
    <property type="evidence" value="ECO:0000266"/>
    <property type="project" value="RGD"/>
</dbReference>
<dbReference type="GO" id="GO:0045944">
    <property type="term" value="P:positive regulation of transcription by RNA polymerase II"/>
    <property type="evidence" value="ECO:0000266"/>
    <property type="project" value="RGD"/>
</dbReference>
<dbReference type="GO" id="GO:2000309">
    <property type="term" value="P:positive regulation of tumor necrosis factor (ligand) superfamily member 11 production"/>
    <property type="evidence" value="ECO:0000315"/>
    <property type="project" value="RGD"/>
</dbReference>
<dbReference type="GO" id="GO:0032760">
    <property type="term" value="P:positive regulation of tumor necrosis factor production"/>
    <property type="evidence" value="ECO:0000315"/>
    <property type="project" value="RGD"/>
</dbReference>
<dbReference type="GO" id="GO:0072593">
    <property type="term" value="P:reactive oxygen species metabolic process"/>
    <property type="evidence" value="ECO:0000266"/>
    <property type="project" value="RGD"/>
</dbReference>
<dbReference type="GO" id="GO:0070372">
    <property type="term" value="P:regulation of ERK1 and ERK2 cascade"/>
    <property type="evidence" value="ECO:0000266"/>
    <property type="project" value="RGD"/>
</dbReference>
<dbReference type="GO" id="GO:0007165">
    <property type="term" value="P:signal transduction"/>
    <property type="evidence" value="ECO:0000318"/>
    <property type="project" value="GO_Central"/>
</dbReference>
<dbReference type="GO" id="GO:0003281">
    <property type="term" value="P:ventricular septum development"/>
    <property type="evidence" value="ECO:0000266"/>
    <property type="project" value="RGD"/>
</dbReference>
<dbReference type="FunFam" id="2.10.70.10:FF:000015">
    <property type="entry name" value="CYR61 isoform 1"/>
    <property type="match status" value="1"/>
</dbReference>
<dbReference type="FunFam" id="2.20.100.10:FF:000038">
    <property type="entry name" value="CYR61 isoform 1"/>
    <property type="match status" value="1"/>
</dbReference>
<dbReference type="Gene3D" id="2.10.70.10">
    <property type="entry name" value="Complement Module, domain 1"/>
    <property type="match status" value="1"/>
</dbReference>
<dbReference type="Gene3D" id="2.20.100.10">
    <property type="entry name" value="Thrombospondin type-1 (TSP1) repeat"/>
    <property type="match status" value="1"/>
</dbReference>
<dbReference type="InterPro" id="IPR050941">
    <property type="entry name" value="CCN"/>
</dbReference>
<dbReference type="InterPro" id="IPR006207">
    <property type="entry name" value="Cys_knot_C"/>
</dbReference>
<dbReference type="InterPro" id="IPR006208">
    <property type="entry name" value="Glyco_hormone_CN"/>
</dbReference>
<dbReference type="InterPro" id="IPR009030">
    <property type="entry name" value="Growth_fac_rcpt_cys_sf"/>
</dbReference>
<dbReference type="InterPro" id="IPR000867">
    <property type="entry name" value="IGFBP-like"/>
</dbReference>
<dbReference type="InterPro" id="IPR012395">
    <property type="entry name" value="IGFBP_CNN"/>
</dbReference>
<dbReference type="InterPro" id="IPR017891">
    <property type="entry name" value="Insulin_GF-bd_Cys-rich_CS"/>
</dbReference>
<dbReference type="InterPro" id="IPR043973">
    <property type="entry name" value="TSP1_CCN"/>
</dbReference>
<dbReference type="InterPro" id="IPR000884">
    <property type="entry name" value="TSP1_rpt"/>
</dbReference>
<dbReference type="InterPro" id="IPR036383">
    <property type="entry name" value="TSP1_rpt_sf"/>
</dbReference>
<dbReference type="InterPro" id="IPR001007">
    <property type="entry name" value="VWF_dom"/>
</dbReference>
<dbReference type="PANTHER" id="PTHR11348:SF18">
    <property type="entry name" value="CCN FAMILY MEMBER 1"/>
    <property type="match status" value="1"/>
</dbReference>
<dbReference type="PANTHER" id="PTHR11348">
    <property type="entry name" value="CONNECTIVE TISSUE GROWTH FACTOR-RELATED"/>
    <property type="match status" value="1"/>
</dbReference>
<dbReference type="Pfam" id="PF00007">
    <property type="entry name" value="Cys_knot"/>
    <property type="match status" value="1"/>
</dbReference>
<dbReference type="Pfam" id="PF00219">
    <property type="entry name" value="IGFBP"/>
    <property type="match status" value="1"/>
</dbReference>
<dbReference type="Pfam" id="PF19035">
    <property type="entry name" value="TSP1_CCN"/>
    <property type="match status" value="1"/>
</dbReference>
<dbReference type="Pfam" id="PF00093">
    <property type="entry name" value="VWC"/>
    <property type="match status" value="1"/>
</dbReference>
<dbReference type="PIRSF" id="PIRSF036495">
    <property type="entry name" value="IGFBP_rP_CNN"/>
    <property type="match status" value="1"/>
</dbReference>
<dbReference type="SMART" id="SM00041">
    <property type="entry name" value="CT"/>
    <property type="match status" value="1"/>
</dbReference>
<dbReference type="SMART" id="SM00121">
    <property type="entry name" value="IB"/>
    <property type="match status" value="1"/>
</dbReference>
<dbReference type="SMART" id="SM00209">
    <property type="entry name" value="TSP1"/>
    <property type="match status" value="1"/>
</dbReference>
<dbReference type="SMART" id="SM00214">
    <property type="entry name" value="VWC"/>
    <property type="match status" value="1"/>
</dbReference>
<dbReference type="SUPFAM" id="SSF57603">
    <property type="entry name" value="FnI-like domain"/>
    <property type="match status" value="1"/>
</dbReference>
<dbReference type="SUPFAM" id="SSF57184">
    <property type="entry name" value="Growth factor receptor domain"/>
    <property type="match status" value="1"/>
</dbReference>
<dbReference type="SUPFAM" id="SSF82895">
    <property type="entry name" value="TSP-1 type 1 repeat"/>
    <property type="match status" value="1"/>
</dbReference>
<dbReference type="PROSITE" id="PS01185">
    <property type="entry name" value="CTCK_1"/>
    <property type="match status" value="1"/>
</dbReference>
<dbReference type="PROSITE" id="PS01225">
    <property type="entry name" value="CTCK_2"/>
    <property type="match status" value="1"/>
</dbReference>
<dbReference type="PROSITE" id="PS00222">
    <property type="entry name" value="IGFBP_N_1"/>
    <property type="match status" value="1"/>
</dbReference>
<dbReference type="PROSITE" id="PS51323">
    <property type="entry name" value="IGFBP_N_2"/>
    <property type="match status" value="1"/>
</dbReference>
<dbReference type="PROSITE" id="PS50092">
    <property type="entry name" value="TSP1"/>
    <property type="match status" value="1"/>
</dbReference>
<dbReference type="PROSITE" id="PS01208">
    <property type="entry name" value="VWFC_1"/>
    <property type="match status" value="1"/>
</dbReference>
<dbReference type="PROSITE" id="PS50184">
    <property type="entry name" value="VWFC_2"/>
    <property type="match status" value="1"/>
</dbReference>
<evidence type="ECO:0000250" key="1"/>
<evidence type="ECO:0000250" key="2">
    <source>
        <dbReference type="UniProtKB" id="O00622"/>
    </source>
</evidence>
<evidence type="ECO:0000250" key="3">
    <source>
        <dbReference type="UniProtKB" id="P18406"/>
    </source>
</evidence>
<evidence type="ECO:0000255" key="4"/>
<evidence type="ECO:0000255" key="5">
    <source>
        <dbReference type="PROSITE-ProRule" id="PRU00039"/>
    </source>
</evidence>
<evidence type="ECO:0000255" key="6">
    <source>
        <dbReference type="PROSITE-ProRule" id="PRU00210"/>
    </source>
</evidence>
<evidence type="ECO:0000255" key="7">
    <source>
        <dbReference type="PROSITE-ProRule" id="PRU00220"/>
    </source>
</evidence>
<evidence type="ECO:0000255" key="8">
    <source>
        <dbReference type="PROSITE-ProRule" id="PRU00653"/>
    </source>
</evidence>
<evidence type="ECO:0000303" key="9">
    <source>
    </source>
</evidence>
<evidence type="ECO:0000305" key="10"/>
<evidence type="ECO:0000312" key="11">
    <source>
        <dbReference type="RGD" id="620763"/>
    </source>
</evidence>
<feature type="signal peptide" evidence="4">
    <location>
        <begin position="1"/>
        <end position="24"/>
    </location>
</feature>
<feature type="chain" id="PRO_0000014400" description="CCN family member 1">
    <location>
        <begin position="25"/>
        <end position="379"/>
    </location>
</feature>
<feature type="domain" description="IGFBP N-terminal" evidence="8">
    <location>
        <begin position="25"/>
        <end position="94"/>
    </location>
</feature>
<feature type="domain" description="VWFC" evidence="7">
    <location>
        <begin position="98"/>
        <end position="164"/>
    </location>
</feature>
<feature type="domain" description="TSP type-1" evidence="6">
    <location>
        <begin position="226"/>
        <end position="271"/>
    </location>
</feature>
<feature type="domain" description="CTCK" evidence="5">
    <location>
        <begin position="284"/>
        <end position="358"/>
    </location>
</feature>
<feature type="region of interest" description="Heparin-binding" evidence="3">
    <location>
        <begin position="277"/>
        <end position="313"/>
    </location>
</feature>
<feature type="modified residue" description="Phosphoserine" evidence="2">
    <location>
        <position position="184"/>
    </location>
</feature>
<feature type="disulfide bond" evidence="8">
    <location>
        <begin position="26"/>
        <end position="50"/>
    </location>
</feature>
<feature type="disulfide bond" evidence="8">
    <location>
        <begin position="30"/>
        <end position="52"/>
    </location>
</feature>
<feature type="disulfide bond" evidence="8">
    <location>
        <begin position="32"/>
        <end position="53"/>
    </location>
</feature>
<feature type="disulfide bond" evidence="8">
    <location>
        <begin position="39"/>
        <end position="56"/>
    </location>
</feature>
<feature type="disulfide bond" evidence="8">
    <location>
        <begin position="64"/>
        <end position="78"/>
    </location>
</feature>
<feature type="disulfide bond" evidence="8">
    <location>
        <begin position="70"/>
        <end position="91"/>
    </location>
</feature>
<feature type="disulfide bond" evidence="1">
    <location>
        <begin position="284"/>
        <end position="321"/>
    </location>
</feature>
<feature type="disulfide bond" evidence="1">
    <location>
        <begin position="301"/>
        <end position="335"/>
    </location>
</feature>
<feature type="disulfide bond" evidence="1">
    <location>
        <begin position="312"/>
        <end position="351"/>
    </location>
</feature>
<feature type="disulfide bond" evidence="1">
    <location>
        <begin position="315"/>
        <end position="353"/>
    </location>
</feature>
<feature type="disulfide bond" evidence="1">
    <location>
        <begin position="320"/>
        <end position="357"/>
    </location>
</feature>